<proteinExistence type="inferred from homology"/>
<gene>
    <name evidence="1" type="primary">dnaK</name>
    <name type="ordered locus">Mkms_0473</name>
</gene>
<organism>
    <name type="scientific">Mycobacterium sp. (strain KMS)</name>
    <dbReference type="NCBI Taxonomy" id="189918"/>
    <lineage>
        <taxon>Bacteria</taxon>
        <taxon>Bacillati</taxon>
        <taxon>Actinomycetota</taxon>
        <taxon>Actinomycetes</taxon>
        <taxon>Mycobacteriales</taxon>
        <taxon>Mycobacteriaceae</taxon>
        <taxon>Mycobacterium</taxon>
    </lineage>
</organism>
<reference key="1">
    <citation type="submission" date="2006-12" db="EMBL/GenBank/DDBJ databases">
        <title>Complete sequence of chromosome of Mycobacterium sp. KMS.</title>
        <authorList>
            <consortium name="US DOE Joint Genome Institute"/>
            <person name="Copeland A."/>
            <person name="Lucas S."/>
            <person name="Lapidus A."/>
            <person name="Barry K."/>
            <person name="Detter J.C."/>
            <person name="Glavina del Rio T."/>
            <person name="Hammon N."/>
            <person name="Israni S."/>
            <person name="Dalin E."/>
            <person name="Tice H."/>
            <person name="Pitluck S."/>
            <person name="Kiss H."/>
            <person name="Brettin T."/>
            <person name="Bruce D."/>
            <person name="Han C."/>
            <person name="Tapia R."/>
            <person name="Gilna P."/>
            <person name="Schmutz J."/>
            <person name="Larimer F."/>
            <person name="Land M."/>
            <person name="Hauser L."/>
            <person name="Kyrpides N."/>
            <person name="Mikhailova N."/>
            <person name="Miller C.D."/>
            <person name="Richardson P."/>
        </authorList>
    </citation>
    <scope>NUCLEOTIDE SEQUENCE [LARGE SCALE GENOMIC DNA]</scope>
    <source>
        <strain>KMS</strain>
    </source>
</reference>
<sequence>MARAVGIDLGTTNSVVAVLEGGDPVVVANSEGSRTTPSVVAFARNGEVLVGQPAKNQAVTNVDRTIRSVKRHMGTDWNTEIDGKKYTAQEISARTLMKLKRDAESYLGEDITDAVITVPAYFNDAQRQATKEAGQIAGLNVLRIVNEPTAAALAYGLDKGEKEQTILVFDLGGGTFDVSLLEIGEGVVEVRATSGDNHLGGDDWDERVVTWLVDKFKASSGIDLTKDKMAMQRLREAAEKAKIELSSSQSTSINLPYITVDADKNPLFLDEQLTRAEFQRITQDLLDRTRQPFQSVIKDAGISVGDIDHVVLVGGSTRMPAVSELVKEMTGGKEPNKGVNPDEVVAVGAALQAGVLKGEVKDVLLLDVTPLSLGIETKGGVMTKLIERNTTIPTKRSETFTTADDNQPSVQIQVFQGEREIASHNKLLGSFELTGIPPAPRGVPQIEVTFDIDANGIVHVTAKDKGTGKENTIRIQEGSGLSKEEIDRMIKDAEAHADEDRKRREEADVRNQAETLVYQTEKFVKEQREAEGGSKVPEDVLTKVDGAISEAKTALAGTDIGAIKAAMEKLGTESQALGQAIYEATQAEQAAGGGAGGADGSSSSSDDDVVDAEVVDDDRENK</sequence>
<protein>
    <recommendedName>
        <fullName evidence="1">Chaperone protein DnaK</fullName>
    </recommendedName>
    <alternativeName>
        <fullName evidence="1">HSP70</fullName>
    </alternativeName>
    <alternativeName>
        <fullName evidence="1">Heat shock 70 kDa protein</fullName>
    </alternativeName>
    <alternativeName>
        <fullName evidence="1">Heat shock protein 70</fullName>
    </alternativeName>
</protein>
<keyword id="KW-0067">ATP-binding</keyword>
<keyword id="KW-0143">Chaperone</keyword>
<keyword id="KW-0547">Nucleotide-binding</keyword>
<keyword id="KW-0597">Phosphoprotein</keyword>
<keyword id="KW-0346">Stress response</keyword>
<comment type="function">
    <text evidence="1">Acts as a chaperone.</text>
</comment>
<comment type="induction">
    <text evidence="1">By stress conditions e.g. heat shock.</text>
</comment>
<comment type="similarity">
    <text evidence="1">Belongs to the heat shock protein 70 family.</text>
</comment>
<name>DNAK_MYCSK</name>
<evidence type="ECO:0000255" key="1">
    <source>
        <dbReference type="HAMAP-Rule" id="MF_00332"/>
    </source>
</evidence>
<evidence type="ECO:0000256" key="2">
    <source>
        <dbReference type="SAM" id="MobiDB-lite"/>
    </source>
</evidence>
<feature type="chain" id="PRO_1000059609" description="Chaperone protein DnaK">
    <location>
        <begin position="1"/>
        <end position="622"/>
    </location>
</feature>
<feature type="region of interest" description="Disordered" evidence="2">
    <location>
        <begin position="494"/>
        <end position="513"/>
    </location>
</feature>
<feature type="region of interest" description="Disordered" evidence="2">
    <location>
        <begin position="588"/>
        <end position="622"/>
    </location>
</feature>
<feature type="compositionally biased region" description="Basic and acidic residues" evidence="2">
    <location>
        <begin position="494"/>
        <end position="511"/>
    </location>
</feature>
<feature type="compositionally biased region" description="Acidic residues" evidence="2">
    <location>
        <begin position="605"/>
        <end position="622"/>
    </location>
</feature>
<feature type="modified residue" description="Phosphothreonine; by autocatalysis" evidence="1">
    <location>
        <position position="175"/>
    </location>
</feature>
<dbReference type="EMBL" id="CP000518">
    <property type="protein sequence ID" value="ABL89689.1"/>
    <property type="molecule type" value="Genomic_DNA"/>
</dbReference>
<dbReference type="SMR" id="A1UA31"/>
<dbReference type="STRING" id="189918.Mkms_0473"/>
<dbReference type="KEGG" id="mkm:Mkms_0473"/>
<dbReference type="HOGENOM" id="CLU_005965_2_4_11"/>
<dbReference type="OrthoDB" id="9766019at2"/>
<dbReference type="GO" id="GO:0005524">
    <property type="term" value="F:ATP binding"/>
    <property type="evidence" value="ECO:0007669"/>
    <property type="project" value="UniProtKB-UniRule"/>
</dbReference>
<dbReference type="GO" id="GO:0140662">
    <property type="term" value="F:ATP-dependent protein folding chaperone"/>
    <property type="evidence" value="ECO:0007669"/>
    <property type="project" value="InterPro"/>
</dbReference>
<dbReference type="GO" id="GO:0051082">
    <property type="term" value="F:unfolded protein binding"/>
    <property type="evidence" value="ECO:0007669"/>
    <property type="project" value="InterPro"/>
</dbReference>
<dbReference type="CDD" id="cd10234">
    <property type="entry name" value="ASKHA_NBD_HSP70_DnaK-like"/>
    <property type="match status" value="1"/>
</dbReference>
<dbReference type="FunFam" id="2.60.34.10:FF:000014">
    <property type="entry name" value="Chaperone protein DnaK HSP70"/>
    <property type="match status" value="1"/>
</dbReference>
<dbReference type="FunFam" id="1.20.1270.10:FF:000001">
    <property type="entry name" value="Molecular chaperone DnaK"/>
    <property type="match status" value="1"/>
</dbReference>
<dbReference type="FunFam" id="3.30.420.40:FF:000071">
    <property type="entry name" value="Molecular chaperone DnaK"/>
    <property type="match status" value="1"/>
</dbReference>
<dbReference type="FunFam" id="3.90.640.10:FF:000003">
    <property type="entry name" value="Molecular chaperone DnaK"/>
    <property type="match status" value="1"/>
</dbReference>
<dbReference type="Gene3D" id="1.20.1270.10">
    <property type="match status" value="1"/>
</dbReference>
<dbReference type="Gene3D" id="3.30.420.40">
    <property type="match status" value="3"/>
</dbReference>
<dbReference type="Gene3D" id="3.90.640.10">
    <property type="entry name" value="Actin, Chain A, domain 4"/>
    <property type="match status" value="1"/>
</dbReference>
<dbReference type="Gene3D" id="2.60.34.10">
    <property type="entry name" value="Substrate Binding Domain Of DNAk, Chain A, domain 1"/>
    <property type="match status" value="1"/>
</dbReference>
<dbReference type="HAMAP" id="MF_00332">
    <property type="entry name" value="DnaK"/>
    <property type="match status" value="1"/>
</dbReference>
<dbReference type="InterPro" id="IPR043129">
    <property type="entry name" value="ATPase_NBD"/>
</dbReference>
<dbReference type="InterPro" id="IPR012725">
    <property type="entry name" value="Chaperone_DnaK"/>
</dbReference>
<dbReference type="InterPro" id="IPR018181">
    <property type="entry name" value="Heat_shock_70_CS"/>
</dbReference>
<dbReference type="InterPro" id="IPR029048">
    <property type="entry name" value="HSP70_C_sf"/>
</dbReference>
<dbReference type="InterPro" id="IPR029047">
    <property type="entry name" value="HSP70_peptide-bd_sf"/>
</dbReference>
<dbReference type="InterPro" id="IPR013126">
    <property type="entry name" value="Hsp_70_fam"/>
</dbReference>
<dbReference type="NCBIfam" id="NF001413">
    <property type="entry name" value="PRK00290.1"/>
    <property type="match status" value="1"/>
</dbReference>
<dbReference type="NCBIfam" id="TIGR02350">
    <property type="entry name" value="prok_dnaK"/>
    <property type="match status" value="1"/>
</dbReference>
<dbReference type="PANTHER" id="PTHR19375">
    <property type="entry name" value="HEAT SHOCK PROTEIN 70KDA"/>
    <property type="match status" value="1"/>
</dbReference>
<dbReference type="Pfam" id="PF00012">
    <property type="entry name" value="HSP70"/>
    <property type="match status" value="2"/>
</dbReference>
<dbReference type="PRINTS" id="PR00301">
    <property type="entry name" value="HEATSHOCK70"/>
</dbReference>
<dbReference type="SUPFAM" id="SSF53067">
    <property type="entry name" value="Actin-like ATPase domain"/>
    <property type="match status" value="2"/>
</dbReference>
<dbReference type="SUPFAM" id="SSF100934">
    <property type="entry name" value="Heat shock protein 70kD (HSP70), C-terminal subdomain"/>
    <property type="match status" value="1"/>
</dbReference>
<dbReference type="SUPFAM" id="SSF100920">
    <property type="entry name" value="Heat shock protein 70kD (HSP70), peptide-binding domain"/>
    <property type="match status" value="1"/>
</dbReference>
<dbReference type="PROSITE" id="PS00297">
    <property type="entry name" value="HSP70_1"/>
    <property type="match status" value="1"/>
</dbReference>
<dbReference type="PROSITE" id="PS00329">
    <property type="entry name" value="HSP70_2"/>
    <property type="match status" value="1"/>
</dbReference>
<dbReference type="PROSITE" id="PS01036">
    <property type="entry name" value="HSP70_3"/>
    <property type="match status" value="1"/>
</dbReference>
<accession>A1UA31</accession>